<keyword id="KW-0031">Aminopeptidase</keyword>
<keyword id="KW-0963">Cytoplasm</keyword>
<keyword id="KW-0378">Hydrolase</keyword>
<keyword id="KW-0464">Manganese</keyword>
<keyword id="KW-0479">Metal-binding</keyword>
<keyword id="KW-0645">Protease</keyword>
<keyword id="KW-1185">Reference proteome</keyword>
<reference key="1">
    <citation type="submission" date="2009-05" db="EMBL/GenBank/DDBJ databases">
        <title>Complete sequence of Tolumonas auensis DSM 9187.</title>
        <authorList>
            <consortium name="US DOE Joint Genome Institute"/>
            <person name="Lucas S."/>
            <person name="Copeland A."/>
            <person name="Lapidus A."/>
            <person name="Glavina del Rio T."/>
            <person name="Tice H."/>
            <person name="Bruce D."/>
            <person name="Goodwin L."/>
            <person name="Pitluck S."/>
            <person name="Chertkov O."/>
            <person name="Brettin T."/>
            <person name="Detter J.C."/>
            <person name="Han C."/>
            <person name="Larimer F."/>
            <person name="Land M."/>
            <person name="Hauser L."/>
            <person name="Kyrpides N."/>
            <person name="Mikhailova N."/>
            <person name="Spring S."/>
            <person name="Beller H."/>
        </authorList>
    </citation>
    <scope>NUCLEOTIDE SEQUENCE [LARGE SCALE GENOMIC DNA]</scope>
    <source>
        <strain>DSM 9187 / NBRC 110442 / TA 4</strain>
    </source>
</reference>
<gene>
    <name evidence="1" type="primary">pepA</name>
    <name type="ordered locus">Tola_0551</name>
</gene>
<dbReference type="EC" id="3.4.11.1" evidence="1"/>
<dbReference type="EC" id="3.4.11.10" evidence="1"/>
<dbReference type="EMBL" id="CP001616">
    <property type="protein sequence ID" value="ACQ92180.1"/>
    <property type="molecule type" value="Genomic_DNA"/>
</dbReference>
<dbReference type="RefSeq" id="WP_012728779.1">
    <property type="nucleotide sequence ID" value="NC_012691.1"/>
</dbReference>
<dbReference type="SMR" id="C4LA51"/>
<dbReference type="STRING" id="595494.Tola_0551"/>
<dbReference type="MEROPS" id="M17.003"/>
<dbReference type="KEGG" id="tau:Tola_0551"/>
<dbReference type="eggNOG" id="COG0260">
    <property type="taxonomic scope" value="Bacteria"/>
</dbReference>
<dbReference type="HOGENOM" id="CLU_013734_2_2_6"/>
<dbReference type="OrthoDB" id="9809354at2"/>
<dbReference type="Proteomes" id="UP000009073">
    <property type="component" value="Chromosome"/>
</dbReference>
<dbReference type="GO" id="GO:0005737">
    <property type="term" value="C:cytoplasm"/>
    <property type="evidence" value="ECO:0007669"/>
    <property type="project" value="UniProtKB-SubCell"/>
</dbReference>
<dbReference type="GO" id="GO:0030145">
    <property type="term" value="F:manganese ion binding"/>
    <property type="evidence" value="ECO:0007669"/>
    <property type="project" value="UniProtKB-UniRule"/>
</dbReference>
<dbReference type="GO" id="GO:0070006">
    <property type="term" value="F:metalloaminopeptidase activity"/>
    <property type="evidence" value="ECO:0007669"/>
    <property type="project" value="InterPro"/>
</dbReference>
<dbReference type="GO" id="GO:0006508">
    <property type="term" value="P:proteolysis"/>
    <property type="evidence" value="ECO:0007669"/>
    <property type="project" value="UniProtKB-KW"/>
</dbReference>
<dbReference type="CDD" id="cd00433">
    <property type="entry name" value="Peptidase_M17"/>
    <property type="match status" value="1"/>
</dbReference>
<dbReference type="FunFam" id="3.40.220.10:FF:000001">
    <property type="entry name" value="Probable cytosol aminopeptidase"/>
    <property type="match status" value="1"/>
</dbReference>
<dbReference type="FunFam" id="3.40.630.10:FF:000004">
    <property type="entry name" value="Probable cytosol aminopeptidase"/>
    <property type="match status" value="1"/>
</dbReference>
<dbReference type="Gene3D" id="3.40.220.10">
    <property type="entry name" value="Leucine Aminopeptidase, subunit E, domain 1"/>
    <property type="match status" value="1"/>
</dbReference>
<dbReference type="Gene3D" id="3.40.630.10">
    <property type="entry name" value="Zn peptidases"/>
    <property type="match status" value="1"/>
</dbReference>
<dbReference type="HAMAP" id="MF_00181">
    <property type="entry name" value="Cytosol_peptidase_M17"/>
    <property type="match status" value="1"/>
</dbReference>
<dbReference type="InterPro" id="IPR011356">
    <property type="entry name" value="Leucine_aapep/pepB"/>
</dbReference>
<dbReference type="InterPro" id="IPR043472">
    <property type="entry name" value="Macro_dom-like"/>
</dbReference>
<dbReference type="InterPro" id="IPR000819">
    <property type="entry name" value="Peptidase_M17_C"/>
</dbReference>
<dbReference type="InterPro" id="IPR023042">
    <property type="entry name" value="Peptidase_M17_leu_NH2_pept"/>
</dbReference>
<dbReference type="InterPro" id="IPR008283">
    <property type="entry name" value="Peptidase_M17_N"/>
</dbReference>
<dbReference type="NCBIfam" id="NF002072">
    <property type="entry name" value="PRK00913.1-1"/>
    <property type="match status" value="1"/>
</dbReference>
<dbReference type="NCBIfam" id="NF002073">
    <property type="entry name" value="PRK00913.1-2"/>
    <property type="match status" value="1"/>
</dbReference>
<dbReference type="NCBIfam" id="NF002074">
    <property type="entry name" value="PRK00913.1-4"/>
    <property type="match status" value="1"/>
</dbReference>
<dbReference type="NCBIfam" id="NF002077">
    <property type="entry name" value="PRK00913.2-4"/>
    <property type="match status" value="1"/>
</dbReference>
<dbReference type="PANTHER" id="PTHR11963:SF23">
    <property type="entry name" value="CYTOSOL AMINOPEPTIDASE"/>
    <property type="match status" value="1"/>
</dbReference>
<dbReference type="PANTHER" id="PTHR11963">
    <property type="entry name" value="LEUCINE AMINOPEPTIDASE-RELATED"/>
    <property type="match status" value="1"/>
</dbReference>
<dbReference type="Pfam" id="PF00883">
    <property type="entry name" value="Peptidase_M17"/>
    <property type="match status" value="1"/>
</dbReference>
<dbReference type="Pfam" id="PF02789">
    <property type="entry name" value="Peptidase_M17_N"/>
    <property type="match status" value="1"/>
</dbReference>
<dbReference type="PRINTS" id="PR00481">
    <property type="entry name" value="LAMNOPPTDASE"/>
</dbReference>
<dbReference type="SUPFAM" id="SSF52949">
    <property type="entry name" value="Macro domain-like"/>
    <property type="match status" value="1"/>
</dbReference>
<dbReference type="SUPFAM" id="SSF53187">
    <property type="entry name" value="Zn-dependent exopeptidases"/>
    <property type="match status" value="1"/>
</dbReference>
<dbReference type="PROSITE" id="PS00631">
    <property type="entry name" value="CYTOSOL_AP"/>
    <property type="match status" value="1"/>
</dbReference>
<organism>
    <name type="scientific">Tolumonas auensis (strain DSM 9187 / NBRC 110442 / TA 4)</name>
    <dbReference type="NCBI Taxonomy" id="595494"/>
    <lineage>
        <taxon>Bacteria</taxon>
        <taxon>Pseudomonadati</taxon>
        <taxon>Pseudomonadota</taxon>
        <taxon>Gammaproteobacteria</taxon>
        <taxon>Aeromonadales</taxon>
        <taxon>Aeromonadaceae</taxon>
        <taxon>Tolumonas</taxon>
    </lineage>
</organism>
<feature type="chain" id="PRO_1000203842" description="Probable cytosol aminopeptidase">
    <location>
        <begin position="1"/>
        <end position="500"/>
    </location>
</feature>
<feature type="active site" evidence="1">
    <location>
        <position position="279"/>
    </location>
</feature>
<feature type="active site" evidence="1">
    <location>
        <position position="353"/>
    </location>
</feature>
<feature type="binding site" evidence="1">
    <location>
        <position position="267"/>
    </location>
    <ligand>
        <name>Mn(2+)</name>
        <dbReference type="ChEBI" id="CHEBI:29035"/>
        <label>2</label>
    </ligand>
</feature>
<feature type="binding site" evidence="1">
    <location>
        <position position="272"/>
    </location>
    <ligand>
        <name>Mn(2+)</name>
        <dbReference type="ChEBI" id="CHEBI:29035"/>
        <label>1</label>
    </ligand>
</feature>
<feature type="binding site" evidence="1">
    <location>
        <position position="272"/>
    </location>
    <ligand>
        <name>Mn(2+)</name>
        <dbReference type="ChEBI" id="CHEBI:29035"/>
        <label>2</label>
    </ligand>
</feature>
<feature type="binding site" evidence="1">
    <location>
        <position position="290"/>
    </location>
    <ligand>
        <name>Mn(2+)</name>
        <dbReference type="ChEBI" id="CHEBI:29035"/>
        <label>2</label>
    </ligand>
</feature>
<feature type="binding site" evidence="1">
    <location>
        <position position="349"/>
    </location>
    <ligand>
        <name>Mn(2+)</name>
        <dbReference type="ChEBI" id="CHEBI:29035"/>
        <label>1</label>
    </ligand>
</feature>
<feature type="binding site" evidence="1">
    <location>
        <position position="351"/>
    </location>
    <ligand>
        <name>Mn(2+)</name>
        <dbReference type="ChEBI" id="CHEBI:29035"/>
        <label>1</label>
    </ligand>
</feature>
<feature type="binding site" evidence="1">
    <location>
        <position position="351"/>
    </location>
    <ligand>
        <name>Mn(2+)</name>
        <dbReference type="ChEBI" id="CHEBI:29035"/>
        <label>2</label>
    </ligand>
</feature>
<comment type="function">
    <text evidence="1">Presumably involved in the processing and regular turnover of intracellular proteins. Catalyzes the removal of unsubstituted N-terminal amino acids from various peptides.</text>
</comment>
<comment type="catalytic activity">
    <reaction evidence="1">
        <text>Release of an N-terminal amino acid, Xaa-|-Yaa-, in which Xaa is preferably Leu, but may be other amino acids including Pro although not Arg or Lys, and Yaa may be Pro. Amino acid amides and methyl esters are also readily hydrolyzed, but rates on arylamides are exceedingly low.</text>
        <dbReference type="EC" id="3.4.11.1"/>
    </reaction>
</comment>
<comment type="catalytic activity">
    <reaction evidence="1">
        <text>Release of an N-terminal amino acid, preferentially leucine, but not glutamic or aspartic acids.</text>
        <dbReference type="EC" id="3.4.11.10"/>
    </reaction>
</comment>
<comment type="cofactor">
    <cofactor evidence="1">
        <name>Mn(2+)</name>
        <dbReference type="ChEBI" id="CHEBI:29035"/>
    </cofactor>
    <text evidence="1">Binds 2 manganese ions per subunit.</text>
</comment>
<comment type="subcellular location">
    <subcellularLocation>
        <location evidence="1">Cytoplasm</location>
    </subcellularLocation>
</comment>
<comment type="similarity">
    <text evidence="1">Belongs to the peptidase M17 family.</text>
</comment>
<proteinExistence type="inferred from homology"/>
<evidence type="ECO:0000255" key="1">
    <source>
        <dbReference type="HAMAP-Rule" id="MF_00181"/>
    </source>
</evidence>
<accession>C4LA51</accession>
<sequence length="500" mass="54314">MEFGVKSGSPEKQRSACIVVGVFEPRRLSAVAEQLDRVSDGYLSSLLRRGDLEGKTGQMLLLHQVPGVLSERVLLVGCGKERELDERQFKQIIQKTISTLNETGSMEAVCFLTELHVKGRDAYWKVRQAVETAQNSLYTFDQFKTNKAELRRPLRKLVFNVATRRELSIGEKAIAHGLAISNGMKICRDVANMPPNICTPAYLASQARRLADSCQYITTKVIGEQQMAELGMNAYLAVAKGSSNEAMMSVMEYKGHPDAKPIVLVGKGLTFDSGGISIKPAEGMDEMKYDMGGAASVLGTMTALAELKPPINVIGVLAGAENMPDGKAYRPGDILTSMSGQTIEVLNTDAEGRLVLCDVLTYVERFEPESVVDIATLTGACVIALGSHASGLMSNHNPLAHELLNASELSGDKAWRLPLWDEYQEQIESPFADMVNTGGRPAGAITAGAFLSRFTKKYNWAHLDIAGTAWKSGKEKGSTGRPVPLLTQFLLNRAGVEVED</sequence>
<protein>
    <recommendedName>
        <fullName evidence="1">Probable cytosol aminopeptidase</fullName>
        <ecNumber evidence="1">3.4.11.1</ecNumber>
    </recommendedName>
    <alternativeName>
        <fullName evidence="1">Leucine aminopeptidase</fullName>
        <shortName evidence="1">LAP</shortName>
        <ecNumber evidence="1">3.4.11.10</ecNumber>
    </alternativeName>
    <alternativeName>
        <fullName evidence="1">Leucyl aminopeptidase</fullName>
    </alternativeName>
</protein>
<name>AMPA_TOLAT</name>